<name>RAB9A_RAT</name>
<gene>
    <name evidence="9" type="primary">Rab9a</name>
    <name type="synonym">Rab9</name>
</gene>
<organism>
    <name type="scientific">Rattus norvegicus</name>
    <name type="common">Rat</name>
    <dbReference type="NCBI Taxonomy" id="10116"/>
    <lineage>
        <taxon>Eukaryota</taxon>
        <taxon>Metazoa</taxon>
        <taxon>Chordata</taxon>
        <taxon>Craniata</taxon>
        <taxon>Vertebrata</taxon>
        <taxon>Euteleostomi</taxon>
        <taxon>Mammalia</taxon>
        <taxon>Eutheria</taxon>
        <taxon>Euarchontoglires</taxon>
        <taxon>Glires</taxon>
        <taxon>Rodentia</taxon>
        <taxon>Myomorpha</taxon>
        <taxon>Muroidea</taxon>
        <taxon>Muridae</taxon>
        <taxon>Murinae</taxon>
        <taxon>Rattus</taxon>
    </lineage>
</organism>
<evidence type="ECO:0000250" key="1"/>
<evidence type="ECO:0000250" key="2">
    <source>
        <dbReference type="UniProtKB" id="P24408"/>
    </source>
</evidence>
<evidence type="ECO:0000250" key="3">
    <source>
        <dbReference type="UniProtKB" id="P51151"/>
    </source>
</evidence>
<evidence type="ECO:0000250" key="4">
    <source>
        <dbReference type="UniProtKB" id="P62820"/>
    </source>
</evidence>
<evidence type="ECO:0000250" key="5">
    <source>
        <dbReference type="UniProtKB" id="Q9R0M6"/>
    </source>
</evidence>
<evidence type="ECO:0000269" key="6">
    <source>
    </source>
</evidence>
<evidence type="ECO:0000269" key="7">
    <source>
    </source>
</evidence>
<evidence type="ECO:0000305" key="8"/>
<evidence type="ECO:0000312" key="9">
    <source>
        <dbReference type="RGD" id="619740"/>
    </source>
</evidence>
<sequence length="201" mass="22896">MAGKSSLFKIILLGDGGVGKSSLMNRYVTNKFDSQLFHTIGVEFLNKDLEVDGHFVTMQIWDTAGQERFRSLRTPFYRGSDCCLLTFSVDDSQSFQNLSNWKKEFIYYADVKEPESFPFVILGNKTDIKERQVSTEEAQAWCKDNGDYPYFETSAKDSTNVAAAFEEAVRRILATEDRSDHLIQTDTVNLHRKPKPNSSCC</sequence>
<comment type="function">
    <text evidence="2 3 4 5">The small GTPases Rab are key regulators of intracellular membrane trafficking, from the formation of transport vesicles to their fusion with membranes. Rabs cycle between an inactive GDP-bound form and an active GTP-bound form that is able to recruit to membranes different sets of downstream effectors directly responsible for vesicle formation, movement, tethering and fusion (By similarity). RAB9A is involved in the transport of proteins between the endosomes and the trans-Golgi network (TGN). Specifically uses NDE1/NDEL1 as an effector to interact with the dynein motor complex in order to control retrograde trafficking of RAB9-associated late endosomes to the TGN (By similarity). Involved in the recruitment of SGSM2 to melanosomes and is required for the proper trafficking of melanogenic enzymes TYR, TYRP1 and DCT/TYRP2 to melanosomes in melanocytes (By similarity).</text>
</comment>
<comment type="catalytic activity">
    <reaction evidence="4">
        <text>GTP + H2O = GDP + phosphate + H(+)</text>
        <dbReference type="Rhea" id="RHEA:19669"/>
        <dbReference type="ChEBI" id="CHEBI:15377"/>
        <dbReference type="ChEBI" id="CHEBI:15378"/>
        <dbReference type="ChEBI" id="CHEBI:37565"/>
        <dbReference type="ChEBI" id="CHEBI:43474"/>
        <dbReference type="ChEBI" id="CHEBI:58189"/>
        <dbReference type="EC" id="3.6.5.2"/>
    </reaction>
    <physiologicalReaction direction="left-to-right" evidence="4">
        <dbReference type="Rhea" id="RHEA:19670"/>
    </physiologicalReaction>
</comment>
<comment type="cofactor">
    <cofactor evidence="3">
        <name>Mg(2+)</name>
        <dbReference type="ChEBI" id="CHEBI:18420"/>
    </cofactor>
</comment>
<comment type="activity regulation">
    <text evidence="3">Regulated by guanine nucleotide exchange factors (GEFs) which promote the exchange of bound GDP for free GTP. Regulated by GTPase activating proteins (GAPs) which increase the GTP hydrolysis activity. Inhibited by GDP dissociation inhibitors (GDIs).</text>
</comment>
<comment type="subunit">
    <text evidence="3 7">Interacts (preferentially in its GTP-bound form) with GCC2 (via its GRIP domain) (PubMed:16885419). Interacts (GTP-bound form) with SGSM1; the GDP-bound form has much lower affinity for SGSM1. Interacts with SGSM2. The GTP-bound form but not the GDP-bound form interacts with HPS4 and the BLOC-3 complex (heterodimer of HPS1 and HPS4) but does not interact with HPS1 alone (By similarity). Interacts (GTP-bound form) with NDE1; two RAB9A-GTP molecules lie on the opposite sides of the NDE1 homodimer; the interaction leads to RAB9A-dynein motor tethering. Interacts (GTP-bound form) with NDEL1 (By similarity).</text>
</comment>
<comment type="subcellular location">
    <subcellularLocation>
        <location evidence="3">Cell membrane</location>
        <topology evidence="8">Lipid-anchor</topology>
        <orientation evidence="8">Cytoplasmic side</orientation>
    </subcellularLocation>
    <subcellularLocation>
        <location evidence="3">Endoplasmic reticulum membrane</location>
    </subcellularLocation>
    <subcellularLocation>
        <location evidence="3">Golgi apparatus membrane</location>
    </subcellularLocation>
    <subcellularLocation>
        <location evidence="6">Late endosome</location>
    </subcellularLocation>
    <subcellularLocation>
        <location evidence="3">Cytoplasmic vesicle</location>
        <location evidence="3">Phagosome membrane</location>
        <topology evidence="8">Lipid-anchor</topology>
        <orientation evidence="8">Cytoplasmic side</orientation>
    </subcellularLocation>
    <subcellularLocation>
        <location evidence="3">Cytoplasmic vesicle</location>
        <location evidence="3">Phagosome</location>
    </subcellularLocation>
    <subcellularLocation>
        <location evidence="5">Cytoplasmic vesicle membrane</location>
    </subcellularLocation>
    <subcellularLocation>
        <location evidence="5">Melanosome</location>
    </subcellularLocation>
    <text evidence="3">Colocalizes with OSBPL1A at the late endosome. Recruited to phagosomes containing S.aureus or M.tuberculosis. Mainly localizes to late endosomes and partially localizes to Golgi. Colocalizes with NDE1 to membrane vesicles (By similarity).</text>
</comment>
<comment type="similarity">
    <text evidence="8">Belongs to the small GTPase superfamily. Rab family.</text>
</comment>
<proteinExistence type="evidence at protein level"/>
<protein>
    <recommendedName>
        <fullName>Ras-related protein Rab-9A</fullName>
        <ecNumber evidence="4">3.6.5.2</ecNumber>
    </recommendedName>
</protein>
<feature type="initiator methionine" description="Removed" evidence="3">
    <location>
        <position position="1"/>
    </location>
</feature>
<feature type="chain" id="PRO_0000121141" description="Ras-related protein Rab-9A">
    <location>
        <begin position="2"/>
        <end position="201"/>
    </location>
</feature>
<feature type="short sequence motif" description="Switch 1" evidence="3">
    <location>
        <begin position="31"/>
        <end position="42"/>
    </location>
</feature>
<feature type="short sequence motif" description="Switch 2" evidence="3">
    <location>
        <begin position="64"/>
        <end position="78"/>
    </location>
</feature>
<feature type="binding site" evidence="3">
    <location>
        <position position="17"/>
    </location>
    <ligand>
        <name>GTP</name>
        <dbReference type="ChEBI" id="CHEBI:37565"/>
    </ligand>
</feature>
<feature type="binding site" evidence="3">
    <location>
        <position position="18"/>
    </location>
    <ligand>
        <name>GTP</name>
        <dbReference type="ChEBI" id="CHEBI:37565"/>
    </ligand>
</feature>
<feature type="binding site" evidence="3">
    <location>
        <position position="19"/>
    </location>
    <ligand>
        <name>GTP</name>
        <dbReference type="ChEBI" id="CHEBI:37565"/>
    </ligand>
</feature>
<feature type="binding site" evidence="3">
    <location>
        <position position="20"/>
    </location>
    <ligand>
        <name>GTP</name>
        <dbReference type="ChEBI" id="CHEBI:37565"/>
    </ligand>
</feature>
<feature type="binding site" evidence="3">
    <location>
        <position position="21"/>
    </location>
    <ligand>
        <name>GTP</name>
        <dbReference type="ChEBI" id="CHEBI:37565"/>
    </ligand>
</feature>
<feature type="binding site" evidence="3">
    <location>
        <position position="21"/>
    </location>
    <ligand>
        <name>Mg(2+)</name>
        <dbReference type="ChEBI" id="CHEBI:18420"/>
    </ligand>
</feature>
<feature type="binding site" evidence="3">
    <location>
        <position position="22"/>
    </location>
    <ligand>
        <name>GTP</name>
        <dbReference type="ChEBI" id="CHEBI:37565"/>
    </ligand>
</feature>
<feature type="binding site" evidence="3">
    <location>
        <position position="34"/>
    </location>
    <ligand>
        <name>GTP</name>
        <dbReference type="ChEBI" id="CHEBI:37565"/>
    </ligand>
</feature>
<feature type="binding site" evidence="3">
    <location>
        <position position="38"/>
    </location>
    <ligand>
        <name>GTP</name>
        <dbReference type="ChEBI" id="CHEBI:37565"/>
    </ligand>
</feature>
<feature type="binding site" evidence="3">
    <location>
        <position position="39"/>
    </location>
    <ligand>
        <name>GTP</name>
        <dbReference type="ChEBI" id="CHEBI:37565"/>
    </ligand>
</feature>
<feature type="binding site" evidence="3">
    <location>
        <position position="39"/>
    </location>
    <ligand>
        <name>Mg(2+)</name>
        <dbReference type="ChEBI" id="CHEBI:18420"/>
    </ligand>
</feature>
<feature type="binding site" evidence="3">
    <location>
        <position position="62"/>
    </location>
    <ligand>
        <name>Mg(2+)</name>
        <dbReference type="ChEBI" id="CHEBI:18420"/>
    </ligand>
</feature>
<feature type="binding site" evidence="3">
    <location>
        <position position="65"/>
    </location>
    <ligand>
        <name>GTP</name>
        <dbReference type="ChEBI" id="CHEBI:37565"/>
    </ligand>
</feature>
<feature type="binding site" evidence="3">
    <location>
        <position position="124"/>
    </location>
    <ligand>
        <name>GTP</name>
        <dbReference type="ChEBI" id="CHEBI:37565"/>
    </ligand>
</feature>
<feature type="binding site" evidence="3">
    <location>
        <position position="125"/>
    </location>
    <ligand>
        <name>GTP</name>
        <dbReference type="ChEBI" id="CHEBI:37565"/>
    </ligand>
</feature>
<feature type="binding site" evidence="3">
    <location>
        <position position="127"/>
    </location>
    <ligand>
        <name>GTP</name>
        <dbReference type="ChEBI" id="CHEBI:37565"/>
    </ligand>
</feature>
<feature type="binding site" evidence="3">
    <location>
        <position position="156"/>
    </location>
    <ligand>
        <name>GTP</name>
        <dbReference type="ChEBI" id="CHEBI:37565"/>
    </ligand>
</feature>
<feature type="modified residue" description="N-acetylalanine" evidence="3">
    <location>
        <position position="2"/>
    </location>
</feature>
<feature type="modified residue" description="Phosphoserine" evidence="5">
    <location>
        <position position="34"/>
    </location>
</feature>
<feature type="modified residue" description="Phosphoserine" evidence="3">
    <location>
        <position position="179"/>
    </location>
</feature>
<feature type="modified residue" description="Phosphothreonine" evidence="3">
    <location>
        <position position="187"/>
    </location>
</feature>
<feature type="lipid moiety-binding region" description="S-geranylgeranyl cysteine" evidence="1">
    <location>
        <position position="200"/>
    </location>
</feature>
<feature type="lipid moiety-binding region" description="S-geranylgeranyl cysteine" evidence="1">
    <location>
        <position position="201"/>
    </location>
</feature>
<feature type="sequence conflict" description="In Ref. 1; AAG49586." evidence="8" ref="1">
    <original>T</original>
    <variation>A</variation>
    <location>
        <position position="29"/>
    </location>
</feature>
<reference key="1">
    <citation type="journal article" date="2002" name="Biochem. Biophys. Res. Commun.">
        <title>Intracellular membrane trafficking pathways in bone-resorbing osteoclasts revealed by cloning and subcellular localization studies of small GTP-binding rab proteins.</title>
        <authorList>
            <person name="Zhao H."/>
            <person name="Ettala O."/>
            <person name="Vaananen H.K."/>
        </authorList>
    </citation>
    <scope>NUCLEOTIDE SEQUENCE [MRNA]</scope>
    <scope>SUBCELLULAR LOCATION</scope>
    <source>
        <strain>Sprague-Dawley</strain>
        <tissue>Bone</tissue>
    </source>
</reference>
<reference key="2">
    <citation type="journal article" date="2004" name="Genome Res.">
        <title>The status, quality, and expansion of the NIH full-length cDNA project: the Mammalian Gene Collection (MGC).</title>
        <authorList>
            <consortium name="The MGC Project Team"/>
        </authorList>
    </citation>
    <scope>NUCLEOTIDE SEQUENCE [LARGE SCALE MRNA]</scope>
    <source>
        <tissue>Lung</tissue>
    </source>
</reference>
<reference key="3">
    <citation type="journal article" date="2006" name="Mol. Biol. Cell">
        <title>A functional role for the GCC185 golgin in mannose 6-phosphate receptor recycling.</title>
        <authorList>
            <person name="Reddy J.V."/>
            <person name="Burguete A.S."/>
            <person name="Sridevi K."/>
            <person name="Ganley I.G."/>
            <person name="Nottingham R.M."/>
            <person name="Pfeffer S.R."/>
        </authorList>
    </citation>
    <scope>INTERACTION WITH GCC2</scope>
</reference>
<keyword id="KW-0007">Acetylation</keyword>
<keyword id="KW-1003">Cell membrane</keyword>
<keyword id="KW-0968">Cytoplasmic vesicle</keyword>
<keyword id="KW-0256">Endoplasmic reticulum</keyword>
<keyword id="KW-0967">Endosome</keyword>
<keyword id="KW-0333">Golgi apparatus</keyword>
<keyword id="KW-0342">GTP-binding</keyword>
<keyword id="KW-0378">Hydrolase</keyword>
<keyword id="KW-0449">Lipoprotein</keyword>
<keyword id="KW-0460">Magnesium</keyword>
<keyword id="KW-0472">Membrane</keyword>
<keyword id="KW-0479">Metal-binding</keyword>
<keyword id="KW-0547">Nucleotide-binding</keyword>
<keyword id="KW-0597">Phosphoprotein</keyword>
<keyword id="KW-0636">Prenylation</keyword>
<keyword id="KW-0653">Protein transport</keyword>
<keyword id="KW-1185">Reference proteome</keyword>
<keyword id="KW-0813">Transport</keyword>
<dbReference type="EC" id="3.6.5.2" evidence="4"/>
<dbReference type="EMBL" id="AF325692">
    <property type="protein sequence ID" value="AAG49586.1"/>
    <property type="molecule type" value="mRNA"/>
</dbReference>
<dbReference type="EMBL" id="BC070502">
    <property type="protein sequence ID" value="AAH70502.1"/>
    <property type="molecule type" value="mRNA"/>
</dbReference>
<dbReference type="RefSeq" id="NP_445910.2">
    <property type="nucleotide sequence ID" value="NM_053458.2"/>
</dbReference>
<dbReference type="SMR" id="Q99P75"/>
<dbReference type="FunCoup" id="Q99P75">
    <property type="interactions" value="1228"/>
</dbReference>
<dbReference type="STRING" id="10116.ENSRNOP00000050986"/>
<dbReference type="PhosphoSitePlus" id="Q99P75"/>
<dbReference type="jPOST" id="Q99P75"/>
<dbReference type="PaxDb" id="10116-ENSRNOP00000050986"/>
<dbReference type="Ensembl" id="ENSRNOT00000050018.5">
    <property type="protein sequence ID" value="ENSRNOP00000050986.3"/>
    <property type="gene ID" value="ENSRNOG00000030443.5"/>
</dbReference>
<dbReference type="Ensembl" id="ENSRNOT00000101281.1">
    <property type="protein sequence ID" value="ENSRNOP00000092308.1"/>
    <property type="gene ID" value="ENSRNOG00000030443.5"/>
</dbReference>
<dbReference type="Ensembl" id="ENSRNOT00000106763.1">
    <property type="protein sequence ID" value="ENSRNOP00000088630.1"/>
    <property type="gene ID" value="ENSRNOG00000030443.5"/>
</dbReference>
<dbReference type="Ensembl" id="ENSRNOT00000109401.1">
    <property type="protein sequence ID" value="ENSRNOP00000089377.1"/>
    <property type="gene ID" value="ENSRNOG00000030443.5"/>
</dbReference>
<dbReference type="Ensembl" id="ENSRNOT00000111202.1">
    <property type="protein sequence ID" value="ENSRNOP00000086590.1"/>
    <property type="gene ID" value="ENSRNOG00000030443.5"/>
</dbReference>
<dbReference type="Ensembl" id="ENSRNOT00000118631.1">
    <property type="protein sequence ID" value="ENSRNOP00000080913.1"/>
    <property type="gene ID" value="ENSRNOG00000030443.5"/>
</dbReference>
<dbReference type="Ensembl" id="ENSRNOT00000119653.1">
    <property type="protein sequence ID" value="ENSRNOP00000081896.1"/>
    <property type="gene ID" value="ENSRNOG00000030443.5"/>
</dbReference>
<dbReference type="GeneID" id="84589"/>
<dbReference type="KEGG" id="rno:84589"/>
<dbReference type="UCSC" id="RGD:619740">
    <property type="organism name" value="rat"/>
</dbReference>
<dbReference type="AGR" id="RGD:619740"/>
<dbReference type="CTD" id="9367"/>
<dbReference type="RGD" id="619740">
    <property type="gene designation" value="Rab9a"/>
</dbReference>
<dbReference type="eggNOG" id="KOG0394">
    <property type="taxonomic scope" value="Eukaryota"/>
</dbReference>
<dbReference type="GeneTree" id="ENSGT00940000158619"/>
<dbReference type="HOGENOM" id="CLU_041217_10_6_1"/>
<dbReference type="InParanoid" id="Q99P75"/>
<dbReference type="OMA" id="RSATTCC"/>
<dbReference type="OrthoDB" id="1436450at2759"/>
<dbReference type="PhylomeDB" id="Q99P75"/>
<dbReference type="Reactome" id="R-RNO-6811440">
    <property type="pathway name" value="Retrograde transport at the Trans-Golgi-Network"/>
</dbReference>
<dbReference type="Reactome" id="R-RNO-8873719">
    <property type="pathway name" value="RAB geranylgeranylation"/>
</dbReference>
<dbReference type="Reactome" id="R-RNO-8876198">
    <property type="pathway name" value="RAB GEFs exchange GTP for GDP on RABs"/>
</dbReference>
<dbReference type="Reactome" id="R-RNO-9706019">
    <property type="pathway name" value="RHOBTB3 ATPase cycle"/>
</dbReference>
<dbReference type="PRO" id="PR:Q99P75"/>
<dbReference type="Proteomes" id="UP000002494">
    <property type="component" value="Chromosome X"/>
</dbReference>
<dbReference type="Bgee" id="ENSRNOG00000030443">
    <property type="expression patterns" value="Expressed in liver and 20 other cell types or tissues"/>
</dbReference>
<dbReference type="GO" id="GO:0030659">
    <property type="term" value="C:cytoplasmic vesicle membrane"/>
    <property type="evidence" value="ECO:0000266"/>
    <property type="project" value="RGD"/>
</dbReference>
<dbReference type="GO" id="GO:0005829">
    <property type="term" value="C:cytosol"/>
    <property type="evidence" value="ECO:0007669"/>
    <property type="project" value="GOC"/>
</dbReference>
<dbReference type="GO" id="GO:0005789">
    <property type="term" value="C:endoplasmic reticulum membrane"/>
    <property type="evidence" value="ECO:0007669"/>
    <property type="project" value="UniProtKB-SubCell"/>
</dbReference>
<dbReference type="GO" id="GO:0000139">
    <property type="term" value="C:Golgi membrane"/>
    <property type="evidence" value="ECO:0007669"/>
    <property type="project" value="UniProtKB-SubCell"/>
</dbReference>
<dbReference type="GO" id="GO:0005770">
    <property type="term" value="C:late endosome"/>
    <property type="evidence" value="ECO:0000266"/>
    <property type="project" value="RGD"/>
</dbReference>
<dbReference type="GO" id="GO:0005764">
    <property type="term" value="C:lysosome"/>
    <property type="evidence" value="ECO:0000266"/>
    <property type="project" value="RGD"/>
</dbReference>
<dbReference type="GO" id="GO:0042470">
    <property type="term" value="C:melanosome"/>
    <property type="evidence" value="ECO:0000250"/>
    <property type="project" value="UniProtKB"/>
</dbReference>
<dbReference type="GO" id="GO:0045335">
    <property type="term" value="C:phagocytic vesicle"/>
    <property type="evidence" value="ECO:0000250"/>
    <property type="project" value="UniProtKB"/>
</dbReference>
<dbReference type="GO" id="GO:0030670">
    <property type="term" value="C:phagocytic vesicle membrane"/>
    <property type="evidence" value="ECO:0007669"/>
    <property type="project" value="UniProtKB-SubCell"/>
</dbReference>
<dbReference type="GO" id="GO:0005886">
    <property type="term" value="C:plasma membrane"/>
    <property type="evidence" value="ECO:0007669"/>
    <property type="project" value="UniProtKB-SubCell"/>
</dbReference>
<dbReference type="GO" id="GO:0003925">
    <property type="term" value="F:G protein activity"/>
    <property type="evidence" value="ECO:0000266"/>
    <property type="project" value="RGD"/>
</dbReference>
<dbReference type="GO" id="GO:0019003">
    <property type="term" value="F:GDP binding"/>
    <property type="evidence" value="ECO:0000250"/>
    <property type="project" value="UniProtKB"/>
</dbReference>
<dbReference type="GO" id="GO:0005525">
    <property type="term" value="F:GTP binding"/>
    <property type="evidence" value="ECO:0000250"/>
    <property type="project" value="UniProtKB"/>
</dbReference>
<dbReference type="GO" id="GO:0003924">
    <property type="term" value="F:GTPase activity"/>
    <property type="evidence" value="ECO:0000250"/>
    <property type="project" value="UniProtKB"/>
</dbReference>
<dbReference type="GO" id="GO:0042802">
    <property type="term" value="F:identical protein binding"/>
    <property type="evidence" value="ECO:0000266"/>
    <property type="project" value="RGD"/>
</dbReference>
<dbReference type="GO" id="GO:0045921">
    <property type="term" value="P:positive regulation of exocytosis"/>
    <property type="evidence" value="ECO:0000266"/>
    <property type="project" value="RGD"/>
</dbReference>
<dbReference type="GO" id="GO:0015031">
    <property type="term" value="P:protein transport"/>
    <property type="evidence" value="ECO:0007669"/>
    <property type="project" value="UniProtKB-KW"/>
</dbReference>
<dbReference type="GO" id="GO:0032482">
    <property type="term" value="P:Rab protein signal transduction"/>
    <property type="evidence" value="ECO:0007669"/>
    <property type="project" value="InterPro"/>
</dbReference>
<dbReference type="GO" id="GO:0006898">
    <property type="term" value="P:receptor-mediated endocytosis"/>
    <property type="evidence" value="ECO:0000266"/>
    <property type="project" value="RGD"/>
</dbReference>
<dbReference type="GO" id="GO:0032880">
    <property type="term" value="P:regulation of protein localization"/>
    <property type="evidence" value="ECO:0000266"/>
    <property type="project" value="RGD"/>
</dbReference>
<dbReference type="GO" id="GO:0042147">
    <property type="term" value="P:retrograde transport, endosome to Golgi"/>
    <property type="evidence" value="ECO:0000318"/>
    <property type="project" value="GO_Central"/>
</dbReference>
<dbReference type="CDD" id="cd04116">
    <property type="entry name" value="Rab9"/>
    <property type="match status" value="1"/>
</dbReference>
<dbReference type="FunFam" id="3.40.50.300:FF:000360">
    <property type="entry name" value="RAB9B, member RAS oncogene family"/>
    <property type="match status" value="1"/>
</dbReference>
<dbReference type="Gene3D" id="3.40.50.300">
    <property type="entry name" value="P-loop containing nucleotide triphosphate hydrolases"/>
    <property type="match status" value="1"/>
</dbReference>
<dbReference type="InterPro" id="IPR027417">
    <property type="entry name" value="P-loop_NTPase"/>
</dbReference>
<dbReference type="InterPro" id="IPR041824">
    <property type="entry name" value="Rab9"/>
</dbReference>
<dbReference type="InterPro" id="IPR005225">
    <property type="entry name" value="Small_GTP-bd"/>
</dbReference>
<dbReference type="InterPro" id="IPR001806">
    <property type="entry name" value="Small_GTPase"/>
</dbReference>
<dbReference type="NCBIfam" id="TIGR00231">
    <property type="entry name" value="small_GTP"/>
    <property type="match status" value="1"/>
</dbReference>
<dbReference type="PANTHER" id="PTHR47981">
    <property type="entry name" value="RAB FAMILY"/>
    <property type="match status" value="1"/>
</dbReference>
<dbReference type="PANTHER" id="PTHR47981:SF9">
    <property type="entry name" value="RAS-RELATED PROTEIN RAB-9A"/>
    <property type="match status" value="1"/>
</dbReference>
<dbReference type="Pfam" id="PF00071">
    <property type="entry name" value="Ras"/>
    <property type="match status" value="1"/>
</dbReference>
<dbReference type="PRINTS" id="PR00449">
    <property type="entry name" value="RASTRNSFRMNG"/>
</dbReference>
<dbReference type="SMART" id="SM00175">
    <property type="entry name" value="RAB"/>
    <property type="match status" value="1"/>
</dbReference>
<dbReference type="SMART" id="SM00176">
    <property type="entry name" value="RAN"/>
    <property type="match status" value="1"/>
</dbReference>
<dbReference type="SMART" id="SM00173">
    <property type="entry name" value="RAS"/>
    <property type="match status" value="1"/>
</dbReference>
<dbReference type="SMART" id="SM00174">
    <property type="entry name" value="RHO"/>
    <property type="match status" value="1"/>
</dbReference>
<dbReference type="SUPFAM" id="SSF52540">
    <property type="entry name" value="P-loop containing nucleoside triphosphate hydrolases"/>
    <property type="match status" value="1"/>
</dbReference>
<dbReference type="PROSITE" id="PS51419">
    <property type="entry name" value="RAB"/>
    <property type="match status" value="1"/>
</dbReference>
<accession>Q99P75</accession>
<accession>Q6NS34</accession>